<feature type="signal peptide" evidence="1">
    <location>
        <begin position="1"/>
        <end position="28"/>
    </location>
</feature>
<feature type="chain" id="PRO_0000414204" description="Uncharacterized protein SAOUHSC_00094">
    <location>
        <begin position="29"/>
        <end position="199"/>
    </location>
</feature>
<keyword id="KW-1185">Reference proteome</keyword>
<keyword id="KW-0964">Secreted</keyword>
<keyword id="KW-0732">Signal</keyword>
<protein>
    <recommendedName>
        <fullName>Uncharacterized protein SAOUHSC_00094</fullName>
    </recommendedName>
</protein>
<name>Y094_STAA8</name>
<sequence>MKKLATVGSLIVTSTLVFSSMPFQNAHADTTSMNVSNKQSQNVQNHRPYGGVVPQGMTQAQYTELEKALPQLSAGSNMQDYNMKLYDATQNIADKYNVIITTNVGVFKPHAVRDMNGHALPLTKDGNFYQTNVDANGVNHGGSEMVQNKTGHMSQQGHMNQNTHEPTATHATRSYAIIKPSNDESKSKYAFIKSSNEPK</sequence>
<organism>
    <name type="scientific">Staphylococcus aureus (strain NCTC 8325 / PS 47)</name>
    <dbReference type="NCBI Taxonomy" id="93061"/>
    <lineage>
        <taxon>Bacteria</taxon>
        <taxon>Bacillati</taxon>
        <taxon>Bacillota</taxon>
        <taxon>Bacilli</taxon>
        <taxon>Bacillales</taxon>
        <taxon>Staphylococcaceae</taxon>
        <taxon>Staphylococcus</taxon>
    </lineage>
</organism>
<comment type="subcellular location">
    <subcellularLocation>
        <location evidence="2">Secreted</location>
    </subcellularLocation>
    <text>Suggested to be cell wall associated in the paper, however the bioinformatics evidence however is poor for cell wall localization.</text>
</comment>
<comment type="induction">
    <text evidence="2">Less protein is secreted in a secG or double secG/secY2 mutant (at protein level).</text>
</comment>
<evidence type="ECO:0000255" key="1"/>
<evidence type="ECO:0000269" key="2">
    <source>
    </source>
</evidence>
<dbReference type="EMBL" id="CP000253">
    <property type="protein sequence ID" value="ABD29277.1"/>
    <property type="molecule type" value="Genomic_DNA"/>
</dbReference>
<dbReference type="RefSeq" id="WP_001804439.1">
    <property type="nucleotide sequence ID" value="NZ_LS483365.1"/>
</dbReference>
<dbReference type="RefSeq" id="YP_498695.1">
    <property type="nucleotide sequence ID" value="NC_007795.1"/>
</dbReference>
<dbReference type="PaxDb" id="1280-SAXN108_0120"/>
<dbReference type="GeneID" id="3919805"/>
<dbReference type="KEGG" id="sao:SAOUHSC_00094"/>
<dbReference type="PATRIC" id="fig|93061.5.peg.84"/>
<dbReference type="eggNOG" id="ENOG50305CH">
    <property type="taxonomic scope" value="Bacteria"/>
</dbReference>
<dbReference type="HOGENOM" id="CLU_108941_0_0_9"/>
<dbReference type="OrthoDB" id="2412457at2"/>
<dbReference type="Proteomes" id="UP000008816">
    <property type="component" value="Chromosome"/>
</dbReference>
<dbReference type="GO" id="GO:0005576">
    <property type="term" value="C:extracellular region"/>
    <property type="evidence" value="ECO:0007669"/>
    <property type="project" value="UniProtKB-SubCell"/>
</dbReference>
<accession>Q2G260</accession>
<reference key="1">
    <citation type="book" date="2006" name="Gram positive pathogens, 2nd edition">
        <title>The Staphylococcus aureus NCTC 8325 genome.</title>
        <editorList>
            <person name="Fischetti V."/>
            <person name="Novick R."/>
            <person name="Ferretti J."/>
            <person name="Portnoy D."/>
            <person name="Rood J."/>
        </editorList>
        <authorList>
            <person name="Gillaspy A.F."/>
            <person name="Worrell V."/>
            <person name="Orvis J."/>
            <person name="Roe B.A."/>
            <person name="Dyer D.W."/>
            <person name="Iandolo J.J."/>
        </authorList>
    </citation>
    <scope>NUCLEOTIDE SEQUENCE [LARGE SCALE GENOMIC DNA]</scope>
    <source>
        <strain>NCTC 8325 / PS 47</strain>
    </source>
</reference>
<reference key="2">
    <citation type="journal article" date="2010" name="J. Bacteriol.">
        <title>Synthetic effects of secG and secY2 mutations on exoproteome biogenesis in Staphylococcus aureus.</title>
        <authorList>
            <person name="Sibbald M.J."/>
            <person name="Winter T."/>
            <person name="van der Kooi-Pol M.M."/>
            <person name="Buist G."/>
            <person name="Tsompanidou E."/>
            <person name="Bosma T."/>
            <person name="Schafer T."/>
            <person name="Ohlsen K."/>
            <person name="Hecker M."/>
            <person name="Antelmann H."/>
            <person name="Engelmann S."/>
            <person name="van Dijl J.M."/>
        </authorList>
    </citation>
    <scope>IDENTIFICATION BY MASS SPECTROMETRY</scope>
    <scope>SUBCELLULAR LOCATION</scope>
    <scope>INDUCTION</scope>
    <source>
        <strain>RN4220</strain>
    </source>
</reference>
<proteinExistence type="evidence at protein level"/>
<gene>
    <name type="ordered locus">SAOUHSC_00094</name>
</gene>